<proteinExistence type="inferred from homology"/>
<keyword id="KW-0945">Host-virus interaction</keyword>
<reference key="1">
    <citation type="journal article" date="1992" name="Phytopathology">
        <title>Cloning, identification and partial sequencing of a new geminivirus infecting Brassicaceae.</title>
        <authorList>
            <person name="Abouzid A.M."/>
            <person name="Hiebert E."/>
            <person name="Strandberg J.O."/>
        </authorList>
    </citation>
    <scope>NUCLEOTIDE SEQUENCE [GENOMIC DNA]</scope>
</reference>
<sequence length="132" mass="15630">MDSRTGESITVAQAENSVFIWEVPNPLYFRIQRVEDPLYTRTRIYHIQVRFNHNLRKALDLRKAYFNFQVWTTSMRASGPTYLSRFKCLVMSHLDNLGVIGINHVIRAVRFATDRSYVTHVHENHVINFKIY</sequence>
<feature type="chain" id="PRO_0000323682" description="Replication enhancer protein">
    <location>
        <begin position="1"/>
        <end position="132"/>
    </location>
</feature>
<gene>
    <name type="ORF">AC3</name>
    <name type="ORF">AL3</name>
</gene>
<name>REN_CALCV</name>
<accession>Q96702</accession>
<comment type="function">
    <text evidence="1">Increases viral DNA accumulation. Enhances infectivity and symptom expression (By similarity).</text>
</comment>
<comment type="subunit">
    <text evidence="1">Homooligomer. Interacts with the replication-associated protein (REP). Interacts with host proliferating cell nuclear antigen (PCNA). Interacts with host retinoblastoma-related protein 1 (RBR1), and may thereby deregulate the host cell cycle. Oligomerization and interaction with PCNA are necessary for optimal replication enhancement (By similarity).</text>
</comment>
<comment type="similarity">
    <text evidence="2">Belongs to the geminiviridae replication enhancer protein family.</text>
</comment>
<dbReference type="EMBL" id="U65529">
    <property type="protein sequence ID" value="AAB17961.1"/>
    <property type="molecule type" value="Genomic_DNA"/>
</dbReference>
<dbReference type="KEGG" id="vg:993358"/>
<dbReference type="Proteomes" id="UP000007622">
    <property type="component" value="Genome"/>
</dbReference>
<dbReference type="GO" id="GO:0016032">
    <property type="term" value="P:viral process"/>
    <property type="evidence" value="ECO:0007669"/>
    <property type="project" value="InterPro"/>
</dbReference>
<dbReference type="InterPro" id="IPR000657">
    <property type="entry name" value="Gemini_AL3"/>
</dbReference>
<dbReference type="Pfam" id="PF01407">
    <property type="entry name" value="Gemini_AL3"/>
    <property type="match status" value="1"/>
</dbReference>
<dbReference type="PRINTS" id="PR00231">
    <property type="entry name" value="GEMCOATAL3"/>
</dbReference>
<protein>
    <recommendedName>
        <fullName>Replication enhancer protein</fullName>
        <shortName>REn</shortName>
    </recommendedName>
    <alternativeName>
        <fullName>15.6 kDa protein</fullName>
    </alternativeName>
    <alternativeName>
        <fullName>Protein AC3</fullName>
    </alternativeName>
    <alternativeName>
        <fullName>Protein AL3</fullName>
    </alternativeName>
</protein>
<organism>
    <name type="scientific">Cabbage leaf curl virus (isolate Jamaica)</name>
    <name type="common">CaLCuV</name>
    <dbReference type="NCBI Taxonomy" id="345184"/>
    <lineage>
        <taxon>Viruses</taxon>
        <taxon>Monodnaviria</taxon>
        <taxon>Shotokuvirae</taxon>
        <taxon>Cressdnaviricota</taxon>
        <taxon>Repensiviricetes</taxon>
        <taxon>Geplafuvirales</taxon>
        <taxon>Geminiviridae</taxon>
        <taxon>Begomovirus</taxon>
    </lineage>
</organism>
<organismHost>
    <name type="scientific">Brassica oleracea</name>
    <name type="common">Wild cabbage</name>
    <dbReference type="NCBI Taxonomy" id="3712"/>
</organismHost>
<evidence type="ECO:0000250" key="1"/>
<evidence type="ECO:0000305" key="2"/>